<comment type="function">
    <text evidence="1">Involved in the modulation of the specificity of the ClpAP-mediated ATP-dependent protein degradation.</text>
</comment>
<comment type="subunit">
    <text evidence="1">Binds to the N-terminal domain of the chaperone ClpA.</text>
</comment>
<comment type="similarity">
    <text evidence="1">Belongs to the ClpS family.</text>
</comment>
<accession>B2I9Y0</accession>
<protein>
    <recommendedName>
        <fullName evidence="1">ATP-dependent Clp protease adapter protein ClpS</fullName>
    </recommendedName>
</protein>
<feature type="chain" id="PRO_1000115486" description="ATP-dependent Clp protease adapter protein ClpS">
    <location>
        <begin position="1"/>
        <end position="106"/>
    </location>
</feature>
<feature type="region of interest" description="Disordered" evidence="2">
    <location>
        <begin position="1"/>
        <end position="23"/>
    </location>
</feature>
<feature type="compositionally biased region" description="Basic and acidic residues" evidence="2">
    <location>
        <begin position="1"/>
        <end position="10"/>
    </location>
</feature>
<proteinExistence type="inferred from homology"/>
<sequence>MSQKTVHDQDNALLLETGNTKVAPPPRYQVLLLNDDYTPMDFVIVVLQQFFAMDLKKATQVMLHVHTRGRGVCGFYTREVAESKVAQVNEFSRIHQHPLLCTMKQA</sequence>
<evidence type="ECO:0000255" key="1">
    <source>
        <dbReference type="HAMAP-Rule" id="MF_00302"/>
    </source>
</evidence>
<evidence type="ECO:0000256" key="2">
    <source>
        <dbReference type="SAM" id="MobiDB-lite"/>
    </source>
</evidence>
<organism>
    <name type="scientific">Xylella fastidiosa (strain M23)</name>
    <dbReference type="NCBI Taxonomy" id="405441"/>
    <lineage>
        <taxon>Bacteria</taxon>
        <taxon>Pseudomonadati</taxon>
        <taxon>Pseudomonadota</taxon>
        <taxon>Gammaproteobacteria</taxon>
        <taxon>Lysobacterales</taxon>
        <taxon>Lysobacteraceae</taxon>
        <taxon>Xylella</taxon>
    </lineage>
</organism>
<gene>
    <name evidence="1" type="primary">clpS</name>
    <name type="ordered locus">XfasM23_0698</name>
</gene>
<reference key="1">
    <citation type="journal article" date="2010" name="J. Bacteriol.">
        <title>Whole genome sequences of two Xylella fastidiosa strains (M12 and M23) causing almond leaf scorch disease in California.</title>
        <authorList>
            <person name="Chen J."/>
            <person name="Xie G."/>
            <person name="Han S."/>
            <person name="Chertkov O."/>
            <person name="Sims D."/>
            <person name="Civerolo E.L."/>
        </authorList>
    </citation>
    <scope>NUCLEOTIDE SEQUENCE [LARGE SCALE GENOMIC DNA]</scope>
    <source>
        <strain>M23</strain>
    </source>
</reference>
<name>CLPS_XYLF2</name>
<dbReference type="EMBL" id="CP001011">
    <property type="protein sequence ID" value="ACB92139.1"/>
    <property type="molecule type" value="Genomic_DNA"/>
</dbReference>
<dbReference type="RefSeq" id="WP_004083751.1">
    <property type="nucleotide sequence ID" value="NC_010577.1"/>
</dbReference>
<dbReference type="SMR" id="B2I9Y0"/>
<dbReference type="GeneID" id="93904442"/>
<dbReference type="KEGG" id="xfn:XfasM23_0698"/>
<dbReference type="HOGENOM" id="CLU_134358_2_1_6"/>
<dbReference type="Proteomes" id="UP000001698">
    <property type="component" value="Chromosome"/>
</dbReference>
<dbReference type="GO" id="GO:0030163">
    <property type="term" value="P:protein catabolic process"/>
    <property type="evidence" value="ECO:0007669"/>
    <property type="project" value="InterPro"/>
</dbReference>
<dbReference type="GO" id="GO:0006508">
    <property type="term" value="P:proteolysis"/>
    <property type="evidence" value="ECO:0007669"/>
    <property type="project" value="UniProtKB-UniRule"/>
</dbReference>
<dbReference type="FunFam" id="3.30.1390.10:FF:000002">
    <property type="entry name" value="ATP-dependent Clp protease adapter protein ClpS"/>
    <property type="match status" value="1"/>
</dbReference>
<dbReference type="Gene3D" id="3.30.1390.10">
    <property type="match status" value="1"/>
</dbReference>
<dbReference type="HAMAP" id="MF_00302">
    <property type="entry name" value="ClpS"/>
    <property type="match status" value="1"/>
</dbReference>
<dbReference type="InterPro" id="IPR022935">
    <property type="entry name" value="ClpS"/>
</dbReference>
<dbReference type="InterPro" id="IPR003769">
    <property type="entry name" value="ClpS_core"/>
</dbReference>
<dbReference type="InterPro" id="IPR014719">
    <property type="entry name" value="Ribosomal_bL12_C/ClpS-like"/>
</dbReference>
<dbReference type="NCBIfam" id="NF000672">
    <property type="entry name" value="PRK00033.1-5"/>
    <property type="match status" value="1"/>
</dbReference>
<dbReference type="PANTHER" id="PTHR33473:SF19">
    <property type="entry name" value="ATP-DEPENDENT CLP PROTEASE ADAPTER PROTEIN CLPS"/>
    <property type="match status" value="1"/>
</dbReference>
<dbReference type="PANTHER" id="PTHR33473">
    <property type="entry name" value="ATP-DEPENDENT CLP PROTEASE ADAPTER PROTEIN CLPS1, CHLOROPLASTIC"/>
    <property type="match status" value="1"/>
</dbReference>
<dbReference type="Pfam" id="PF02617">
    <property type="entry name" value="ClpS"/>
    <property type="match status" value="1"/>
</dbReference>
<dbReference type="SUPFAM" id="SSF54736">
    <property type="entry name" value="ClpS-like"/>
    <property type="match status" value="1"/>
</dbReference>